<evidence type="ECO:0000255" key="1">
    <source>
        <dbReference type="HAMAP-Rule" id="MF_01290"/>
    </source>
</evidence>
<evidence type="ECO:0000305" key="2"/>
<protein>
    <recommendedName>
        <fullName evidence="1">2-keto-3-deoxy-L-rhamnonate aldolase</fullName>
        <shortName evidence="1">KDR aldolase</shortName>
        <ecNumber evidence="1">4.1.2.53</ecNumber>
    </recommendedName>
    <alternativeName>
        <fullName evidence="1">2-dehydro-3-deoxyrhamnonate aldolase</fullName>
    </alternativeName>
</protein>
<accession>Q8XE09</accession>
<accession>Q7AC33</accession>
<organism>
    <name type="scientific">Escherichia coli O157:H7</name>
    <dbReference type="NCBI Taxonomy" id="83334"/>
    <lineage>
        <taxon>Bacteria</taxon>
        <taxon>Pseudomonadati</taxon>
        <taxon>Pseudomonadota</taxon>
        <taxon>Gammaproteobacteria</taxon>
        <taxon>Enterobacterales</taxon>
        <taxon>Enterobacteriaceae</taxon>
        <taxon>Escherichia</taxon>
    </lineage>
</organism>
<name>RHMA_ECO57</name>
<proteinExistence type="inferred from homology"/>
<dbReference type="EC" id="4.1.2.53" evidence="1"/>
<dbReference type="EMBL" id="AE005174">
    <property type="protein sequence ID" value="AAG57376.1"/>
    <property type="status" value="ALT_FRAME"/>
    <property type="molecule type" value="Genomic_DNA"/>
</dbReference>
<dbReference type="EMBL" id="BA000007">
    <property type="protein sequence ID" value="BAB36553.1"/>
    <property type="status" value="ALT_FRAME"/>
    <property type="molecule type" value="Genomic_DNA"/>
</dbReference>
<dbReference type="PIR" id="B91020">
    <property type="entry name" value="B91020"/>
</dbReference>
<dbReference type="PIR" id="D85864">
    <property type="entry name" value="D85864"/>
</dbReference>
<dbReference type="RefSeq" id="NP_311157.1">
    <property type="nucleotide sequence ID" value="NC_002695.1"/>
</dbReference>
<dbReference type="SMR" id="Q8XE09"/>
<dbReference type="STRING" id="155864.Z3503"/>
<dbReference type="GeneID" id="916838"/>
<dbReference type="KEGG" id="ece:Z3503"/>
<dbReference type="KEGG" id="ecs:ECs_3130"/>
<dbReference type="PATRIC" id="fig|386585.9.peg.3265"/>
<dbReference type="eggNOG" id="COG3836">
    <property type="taxonomic scope" value="Bacteria"/>
</dbReference>
<dbReference type="HOGENOM" id="CLU_059964_1_0_6"/>
<dbReference type="OMA" id="HYLALGC"/>
<dbReference type="Proteomes" id="UP000000558">
    <property type="component" value="Chromosome"/>
</dbReference>
<dbReference type="Proteomes" id="UP000002519">
    <property type="component" value="Chromosome"/>
</dbReference>
<dbReference type="GO" id="GO:0005737">
    <property type="term" value="C:cytoplasm"/>
    <property type="evidence" value="ECO:0007669"/>
    <property type="project" value="TreeGrafter"/>
</dbReference>
<dbReference type="GO" id="GO:0106099">
    <property type="term" value="F:2-keto-3-deoxy-L-rhamnonate aldolase activity"/>
    <property type="evidence" value="ECO:0007669"/>
    <property type="project" value="UniProtKB-EC"/>
</dbReference>
<dbReference type="GO" id="GO:0000287">
    <property type="term" value="F:magnesium ion binding"/>
    <property type="evidence" value="ECO:0007669"/>
    <property type="project" value="UniProtKB-UniRule"/>
</dbReference>
<dbReference type="FunFam" id="3.20.20.60:FF:000004">
    <property type="entry name" value="5-keto-4-deoxy-D-glucarate aldolase"/>
    <property type="match status" value="1"/>
</dbReference>
<dbReference type="Gene3D" id="3.20.20.60">
    <property type="entry name" value="Phosphoenolpyruvate-binding domains"/>
    <property type="match status" value="1"/>
</dbReference>
<dbReference type="HAMAP" id="MF_01290">
    <property type="entry name" value="KDR_aldolase"/>
    <property type="match status" value="1"/>
</dbReference>
<dbReference type="InterPro" id="IPR005000">
    <property type="entry name" value="Aldolase/citrate-lyase_domain"/>
</dbReference>
<dbReference type="InterPro" id="IPR050251">
    <property type="entry name" value="HpcH-HpaI_aldolase"/>
</dbReference>
<dbReference type="InterPro" id="IPR023593">
    <property type="entry name" value="KDR_aldolase"/>
</dbReference>
<dbReference type="InterPro" id="IPR015813">
    <property type="entry name" value="Pyrv/PenolPyrv_kinase-like_dom"/>
</dbReference>
<dbReference type="InterPro" id="IPR040442">
    <property type="entry name" value="Pyrv_kinase-like_dom_sf"/>
</dbReference>
<dbReference type="NCBIfam" id="NF007521">
    <property type="entry name" value="PRK10128.1"/>
    <property type="match status" value="1"/>
</dbReference>
<dbReference type="PANTHER" id="PTHR30502">
    <property type="entry name" value="2-KETO-3-DEOXY-L-RHAMNONATE ALDOLASE"/>
    <property type="match status" value="1"/>
</dbReference>
<dbReference type="PANTHER" id="PTHR30502:SF5">
    <property type="entry name" value="2-KETO-3-DEOXY-L-RHAMNONATE ALDOLASE"/>
    <property type="match status" value="1"/>
</dbReference>
<dbReference type="Pfam" id="PF03328">
    <property type="entry name" value="HpcH_HpaI"/>
    <property type="match status" value="1"/>
</dbReference>
<dbReference type="SUPFAM" id="SSF51621">
    <property type="entry name" value="Phosphoenolpyruvate/pyruvate domain"/>
    <property type="match status" value="1"/>
</dbReference>
<sequence>MNALLTNPFKERLRKGEVQIGLWLSSTTAYMAEIAATSGYDWLLIDGEHAPNTIQDLYHQLQAVAPYASQPVIRPVEGSKPLIKQVLDIGAQTLLIPMVDTADQARQVVSATRYPPYGERGVGASVARAARWGRIENYMAQVNDSLCLLVQVESKTALDNLDEILDVEGIDGVFIGPADLSASLGYPDNAGHPEVQRIIETSIRRIRAAGKAAGFLAVAPDMAQQCLAWGANFVAVGVDTMLYSDALDQRLAMFKSGKNGPRIKGSY</sequence>
<comment type="function">
    <text evidence="1">Catalyzes the reversible retro-aldol cleavage of 2-keto-3-deoxy-L-rhamnonate (KDR) to pyruvate and lactaldehyde.</text>
</comment>
<comment type="catalytic activity">
    <reaction evidence="1">
        <text>2-dehydro-3-deoxy-L-rhamnonate = (S)-lactaldehyde + pyruvate</text>
        <dbReference type="Rhea" id="RHEA:25784"/>
        <dbReference type="ChEBI" id="CHEBI:15361"/>
        <dbReference type="ChEBI" id="CHEBI:18041"/>
        <dbReference type="ChEBI" id="CHEBI:58371"/>
        <dbReference type="EC" id="4.1.2.53"/>
    </reaction>
</comment>
<comment type="cofactor">
    <cofactor evidence="1">
        <name>Mg(2+)</name>
        <dbReference type="ChEBI" id="CHEBI:18420"/>
    </cofactor>
    <text evidence="1">Binds 1 Mg(2+) ion per subunit.</text>
</comment>
<comment type="subunit">
    <text evidence="1">Homohexamer.</text>
</comment>
<comment type="similarity">
    <text evidence="1">Belongs to the HpcH/HpaI aldolase family. KDR aldolase subfamily.</text>
</comment>
<comment type="sequence caution" evidence="2">
    <conflict type="frameshift">
        <sequence resource="EMBL-CDS" id="AAG57376"/>
    </conflict>
</comment>
<comment type="sequence caution" evidence="2">
    <conflict type="frameshift">
        <sequence resource="EMBL-CDS" id="BAB36553"/>
    </conflict>
</comment>
<keyword id="KW-0456">Lyase</keyword>
<keyword id="KW-0460">Magnesium</keyword>
<keyword id="KW-0479">Metal-binding</keyword>
<keyword id="KW-1185">Reference proteome</keyword>
<gene>
    <name evidence="1" type="primary">rhmA</name>
    <name type="ordered locus">Z3503</name>
    <name type="ordered locus">ECs3130</name>
</gene>
<feature type="chain" id="PRO_0000353163" description="2-keto-3-deoxy-L-rhamnonate aldolase">
    <location>
        <begin position="1"/>
        <end position="267"/>
    </location>
</feature>
<feature type="active site" description="Proton acceptor" evidence="1">
    <location>
        <position position="49"/>
    </location>
</feature>
<feature type="binding site" evidence="1">
    <location>
        <position position="151"/>
    </location>
    <ligand>
        <name>substrate</name>
    </ligand>
</feature>
<feature type="binding site" evidence="1">
    <location>
        <position position="153"/>
    </location>
    <ligand>
        <name>Mg(2+)</name>
        <dbReference type="ChEBI" id="CHEBI:18420"/>
    </ligand>
</feature>
<feature type="binding site" evidence="1">
    <location>
        <position position="178"/>
    </location>
    <ligand>
        <name>substrate</name>
    </ligand>
</feature>
<feature type="binding site" evidence="1">
    <location>
        <position position="179"/>
    </location>
    <ligand>
        <name>Mg(2+)</name>
        <dbReference type="ChEBI" id="CHEBI:18420"/>
    </ligand>
</feature>
<feature type="binding site" evidence="1">
    <location>
        <position position="179"/>
    </location>
    <ligand>
        <name>substrate</name>
    </ligand>
</feature>
<feature type="site" description="Transition state stabilizer" evidence="1">
    <location>
        <position position="74"/>
    </location>
</feature>
<feature type="site" description="Increases basicity of active site His" evidence="1">
    <location>
        <position position="88"/>
    </location>
</feature>
<reference key="1">
    <citation type="journal article" date="2001" name="Nature">
        <title>Genome sequence of enterohaemorrhagic Escherichia coli O157:H7.</title>
        <authorList>
            <person name="Perna N.T."/>
            <person name="Plunkett G. III"/>
            <person name="Burland V."/>
            <person name="Mau B."/>
            <person name="Glasner J.D."/>
            <person name="Rose D.J."/>
            <person name="Mayhew G.F."/>
            <person name="Evans P.S."/>
            <person name="Gregor J."/>
            <person name="Kirkpatrick H.A."/>
            <person name="Posfai G."/>
            <person name="Hackett J."/>
            <person name="Klink S."/>
            <person name="Boutin A."/>
            <person name="Shao Y."/>
            <person name="Miller L."/>
            <person name="Grotbeck E.J."/>
            <person name="Davis N.W."/>
            <person name="Lim A."/>
            <person name="Dimalanta E.T."/>
            <person name="Potamousis K."/>
            <person name="Apodaca J."/>
            <person name="Anantharaman T.S."/>
            <person name="Lin J."/>
            <person name="Yen G."/>
            <person name="Schwartz D.C."/>
            <person name="Welch R.A."/>
            <person name="Blattner F.R."/>
        </authorList>
    </citation>
    <scope>NUCLEOTIDE SEQUENCE [LARGE SCALE GENOMIC DNA]</scope>
    <source>
        <strain>O157:H7 / EDL933 / ATCC 700927 / EHEC</strain>
    </source>
</reference>
<reference key="2">
    <citation type="journal article" date="2001" name="DNA Res.">
        <title>Complete genome sequence of enterohemorrhagic Escherichia coli O157:H7 and genomic comparison with a laboratory strain K-12.</title>
        <authorList>
            <person name="Hayashi T."/>
            <person name="Makino K."/>
            <person name="Ohnishi M."/>
            <person name="Kurokawa K."/>
            <person name="Ishii K."/>
            <person name="Yokoyama K."/>
            <person name="Han C.-G."/>
            <person name="Ohtsubo E."/>
            <person name="Nakayama K."/>
            <person name="Murata T."/>
            <person name="Tanaka M."/>
            <person name="Tobe T."/>
            <person name="Iida T."/>
            <person name="Takami H."/>
            <person name="Honda T."/>
            <person name="Sasakawa C."/>
            <person name="Ogasawara N."/>
            <person name="Yasunaga T."/>
            <person name="Kuhara S."/>
            <person name="Shiba T."/>
            <person name="Hattori M."/>
            <person name="Shinagawa H."/>
        </authorList>
    </citation>
    <scope>NUCLEOTIDE SEQUENCE [LARGE SCALE GENOMIC DNA]</scope>
    <source>
        <strain>O157:H7 / Sakai / RIMD 0509952 / EHEC</strain>
    </source>
</reference>